<feature type="chain" id="PRO_1000013954" description="Glucose-6-phosphate isomerase">
    <location>
        <begin position="1"/>
        <end position="450"/>
    </location>
</feature>
<feature type="active site" description="Proton donor" evidence="1">
    <location>
        <position position="291"/>
    </location>
</feature>
<feature type="active site" evidence="1">
    <location>
        <position position="312"/>
    </location>
</feature>
<feature type="active site" evidence="1">
    <location>
        <position position="426"/>
    </location>
</feature>
<reference key="1">
    <citation type="journal article" date="2007" name="Genome Res.">
        <title>Genome sequence of a proteolytic (Group I) Clostridium botulinum strain Hall A and comparative analysis of the clostridial genomes.</title>
        <authorList>
            <person name="Sebaihia M."/>
            <person name="Peck M.W."/>
            <person name="Minton N.P."/>
            <person name="Thomson N.R."/>
            <person name="Holden M.T.G."/>
            <person name="Mitchell W.J."/>
            <person name="Carter A.T."/>
            <person name="Bentley S.D."/>
            <person name="Mason D.R."/>
            <person name="Crossman L."/>
            <person name="Paul C.J."/>
            <person name="Ivens A."/>
            <person name="Wells-Bennik M.H.J."/>
            <person name="Davis I.J."/>
            <person name="Cerdeno-Tarraga A.M."/>
            <person name="Churcher C."/>
            <person name="Quail M.A."/>
            <person name="Chillingworth T."/>
            <person name="Feltwell T."/>
            <person name="Fraser A."/>
            <person name="Goodhead I."/>
            <person name="Hance Z."/>
            <person name="Jagels K."/>
            <person name="Larke N."/>
            <person name="Maddison M."/>
            <person name="Moule S."/>
            <person name="Mungall K."/>
            <person name="Norbertczak H."/>
            <person name="Rabbinowitsch E."/>
            <person name="Sanders M."/>
            <person name="Simmonds M."/>
            <person name="White B."/>
            <person name="Whithead S."/>
            <person name="Parkhill J."/>
        </authorList>
    </citation>
    <scope>NUCLEOTIDE SEQUENCE [LARGE SCALE GENOMIC DNA]</scope>
    <source>
        <strain>Hall / ATCC 3502 / NCTC 13319 / Type A</strain>
    </source>
</reference>
<reference key="2">
    <citation type="journal article" date="2007" name="PLoS ONE">
        <title>Analysis of the neurotoxin complex genes in Clostridium botulinum A1-A4 and B1 strains: BoNT/A3, /Ba4 and /B1 clusters are located within plasmids.</title>
        <authorList>
            <person name="Smith T.J."/>
            <person name="Hill K.K."/>
            <person name="Foley B.T."/>
            <person name="Detter J.C."/>
            <person name="Munk A.C."/>
            <person name="Bruce D.C."/>
            <person name="Doggett N.A."/>
            <person name="Smith L.A."/>
            <person name="Marks J.D."/>
            <person name="Xie G."/>
            <person name="Brettin T.S."/>
        </authorList>
    </citation>
    <scope>NUCLEOTIDE SEQUENCE [LARGE SCALE GENOMIC DNA]</scope>
    <source>
        <strain>Hall / ATCC 3502 / NCTC 13319 / Type A</strain>
    </source>
</reference>
<sequence>MKNSLSLDLTKTKPYVEEHELQYLESIIREMDNTLGKKTGSGNKFLGWMDLPINYNKEEFARIKKAAEKIKNTCDVFIVIGIGGSYLGSRAAIEMISNTFYNNLDKNQRKVPQIYFAGNNISSTYMADLLELVKDKDICVNVISKSGTTTEPAIAFRIFKELLENKYGKEGAKERIFATTDAAKGALRTLADSEGYETFVIPDDVGGRFSVLTPVGLLPIAASGIDIDEMMKGAADAREEYSSDNIEKNHVYRYVAVRNALYRKGKTTEMLVNFEPCLHYFGEWWKQLYGESEGKDGKGIFPAAADFSTDLHSMGQYIQEGLRNIFETFINVENPRKSIIVKEDKENLDGLNFLADKDMDYVNHQALRGTVLAHNDGGVPAMVLNVPELSAYYFGQLVYFFEKACGISGYLLGVNPFDQPGVEAYKKNMFALLGKPGYENMKATLEERLK</sequence>
<proteinExistence type="inferred from homology"/>
<dbReference type="EC" id="5.3.1.9" evidence="1"/>
<dbReference type="EMBL" id="CP000727">
    <property type="protein sequence ID" value="ABS37962.1"/>
    <property type="molecule type" value="Genomic_DNA"/>
</dbReference>
<dbReference type="EMBL" id="AM412317">
    <property type="protein sequence ID" value="CAL84837.1"/>
    <property type="molecule type" value="Genomic_DNA"/>
</dbReference>
<dbReference type="RefSeq" id="WP_012048231.1">
    <property type="nucleotide sequence ID" value="NC_009698.1"/>
</dbReference>
<dbReference type="RefSeq" id="YP_001255764.1">
    <property type="nucleotide sequence ID" value="NC_009495.1"/>
</dbReference>
<dbReference type="RefSeq" id="YP_001389004.1">
    <property type="nucleotide sequence ID" value="NC_009698.1"/>
</dbReference>
<dbReference type="SMR" id="A5I705"/>
<dbReference type="GeneID" id="5187535"/>
<dbReference type="KEGG" id="cbh:CLC_3221"/>
<dbReference type="KEGG" id="cbo:CBO3278"/>
<dbReference type="PATRIC" id="fig|413999.7.peg.3254"/>
<dbReference type="HOGENOM" id="CLU_037303_0_1_9"/>
<dbReference type="UniPathway" id="UPA00109">
    <property type="reaction ID" value="UER00181"/>
</dbReference>
<dbReference type="UniPathway" id="UPA00138"/>
<dbReference type="PRO" id="PR:A5I705"/>
<dbReference type="Proteomes" id="UP000001986">
    <property type="component" value="Chromosome"/>
</dbReference>
<dbReference type="GO" id="GO:0005829">
    <property type="term" value="C:cytosol"/>
    <property type="evidence" value="ECO:0000318"/>
    <property type="project" value="GO_Central"/>
</dbReference>
<dbReference type="GO" id="GO:0097367">
    <property type="term" value="F:carbohydrate derivative binding"/>
    <property type="evidence" value="ECO:0007669"/>
    <property type="project" value="InterPro"/>
</dbReference>
<dbReference type="GO" id="GO:0004347">
    <property type="term" value="F:glucose-6-phosphate isomerase activity"/>
    <property type="evidence" value="ECO:0000318"/>
    <property type="project" value="GO_Central"/>
</dbReference>
<dbReference type="GO" id="GO:0048029">
    <property type="term" value="F:monosaccharide binding"/>
    <property type="evidence" value="ECO:0000318"/>
    <property type="project" value="GO_Central"/>
</dbReference>
<dbReference type="GO" id="GO:0006094">
    <property type="term" value="P:gluconeogenesis"/>
    <property type="evidence" value="ECO:0000318"/>
    <property type="project" value="GO_Central"/>
</dbReference>
<dbReference type="GO" id="GO:0051156">
    <property type="term" value="P:glucose 6-phosphate metabolic process"/>
    <property type="evidence" value="ECO:0000318"/>
    <property type="project" value="GO_Central"/>
</dbReference>
<dbReference type="GO" id="GO:0006096">
    <property type="term" value="P:glycolytic process"/>
    <property type="evidence" value="ECO:0000318"/>
    <property type="project" value="GO_Central"/>
</dbReference>
<dbReference type="CDD" id="cd05015">
    <property type="entry name" value="SIS_PGI_1"/>
    <property type="match status" value="1"/>
</dbReference>
<dbReference type="CDD" id="cd05016">
    <property type="entry name" value="SIS_PGI_2"/>
    <property type="match status" value="1"/>
</dbReference>
<dbReference type="FunFam" id="3.40.50.10490:FF:000015">
    <property type="entry name" value="Glucose-6-phosphate isomerase"/>
    <property type="match status" value="1"/>
</dbReference>
<dbReference type="FunFam" id="3.40.50.10490:FF:000016">
    <property type="entry name" value="Glucose-6-phosphate isomerase"/>
    <property type="match status" value="1"/>
</dbReference>
<dbReference type="Gene3D" id="3.40.50.10490">
    <property type="entry name" value="Glucose-6-phosphate isomerase like protein, domain 1"/>
    <property type="match status" value="2"/>
</dbReference>
<dbReference type="HAMAP" id="MF_00473">
    <property type="entry name" value="G6P_isomerase"/>
    <property type="match status" value="1"/>
</dbReference>
<dbReference type="InterPro" id="IPR001672">
    <property type="entry name" value="G6P_Isomerase"/>
</dbReference>
<dbReference type="InterPro" id="IPR018189">
    <property type="entry name" value="Phosphoglucose_isomerase_CS"/>
</dbReference>
<dbReference type="InterPro" id="IPR046348">
    <property type="entry name" value="SIS_dom_sf"/>
</dbReference>
<dbReference type="InterPro" id="IPR035476">
    <property type="entry name" value="SIS_PGI_1"/>
</dbReference>
<dbReference type="InterPro" id="IPR035482">
    <property type="entry name" value="SIS_PGI_2"/>
</dbReference>
<dbReference type="NCBIfam" id="NF010697">
    <property type="entry name" value="PRK14097.1"/>
    <property type="match status" value="1"/>
</dbReference>
<dbReference type="PANTHER" id="PTHR11469">
    <property type="entry name" value="GLUCOSE-6-PHOSPHATE ISOMERASE"/>
    <property type="match status" value="1"/>
</dbReference>
<dbReference type="PANTHER" id="PTHR11469:SF1">
    <property type="entry name" value="GLUCOSE-6-PHOSPHATE ISOMERASE"/>
    <property type="match status" value="1"/>
</dbReference>
<dbReference type="Pfam" id="PF00342">
    <property type="entry name" value="PGI"/>
    <property type="match status" value="1"/>
</dbReference>
<dbReference type="PRINTS" id="PR00662">
    <property type="entry name" value="G6PISOMERASE"/>
</dbReference>
<dbReference type="SUPFAM" id="SSF53697">
    <property type="entry name" value="SIS domain"/>
    <property type="match status" value="1"/>
</dbReference>
<dbReference type="PROSITE" id="PS00765">
    <property type="entry name" value="P_GLUCOSE_ISOMERASE_1"/>
    <property type="match status" value="1"/>
</dbReference>
<dbReference type="PROSITE" id="PS00174">
    <property type="entry name" value="P_GLUCOSE_ISOMERASE_2"/>
    <property type="match status" value="1"/>
</dbReference>
<dbReference type="PROSITE" id="PS51463">
    <property type="entry name" value="P_GLUCOSE_ISOMERASE_3"/>
    <property type="match status" value="1"/>
</dbReference>
<keyword id="KW-0963">Cytoplasm</keyword>
<keyword id="KW-0312">Gluconeogenesis</keyword>
<keyword id="KW-0324">Glycolysis</keyword>
<keyword id="KW-0413">Isomerase</keyword>
<keyword id="KW-1185">Reference proteome</keyword>
<gene>
    <name evidence="1" type="primary">pgi</name>
    <name type="ordered locus">CBO3278</name>
    <name type="ordered locus">CLC_3221</name>
</gene>
<protein>
    <recommendedName>
        <fullName evidence="1">Glucose-6-phosphate isomerase</fullName>
        <shortName evidence="1">GPI</shortName>
        <ecNumber evidence="1">5.3.1.9</ecNumber>
    </recommendedName>
    <alternativeName>
        <fullName evidence="1">Phosphoglucose isomerase</fullName>
        <shortName evidence="1">PGI</shortName>
    </alternativeName>
    <alternativeName>
        <fullName evidence="1">Phosphohexose isomerase</fullName>
        <shortName evidence="1">PHI</shortName>
    </alternativeName>
</protein>
<name>G6PI_CLOBH</name>
<accession>A5I705</accession>
<accession>A7G889</accession>
<evidence type="ECO:0000255" key="1">
    <source>
        <dbReference type="HAMAP-Rule" id="MF_00473"/>
    </source>
</evidence>
<comment type="function">
    <text evidence="1">Catalyzes the reversible isomerization of glucose-6-phosphate to fructose-6-phosphate.</text>
</comment>
<comment type="catalytic activity">
    <reaction evidence="1">
        <text>alpha-D-glucose 6-phosphate = beta-D-fructose 6-phosphate</text>
        <dbReference type="Rhea" id="RHEA:11816"/>
        <dbReference type="ChEBI" id="CHEBI:57634"/>
        <dbReference type="ChEBI" id="CHEBI:58225"/>
        <dbReference type="EC" id="5.3.1.9"/>
    </reaction>
</comment>
<comment type="pathway">
    <text evidence="1">Carbohydrate biosynthesis; gluconeogenesis.</text>
</comment>
<comment type="pathway">
    <text evidence="1">Carbohydrate degradation; glycolysis; D-glyceraldehyde 3-phosphate and glycerone phosphate from D-glucose: step 2/4.</text>
</comment>
<comment type="subcellular location">
    <subcellularLocation>
        <location evidence="1">Cytoplasm</location>
    </subcellularLocation>
</comment>
<comment type="similarity">
    <text evidence="1">Belongs to the GPI family.</text>
</comment>
<organism>
    <name type="scientific">Clostridium botulinum (strain Hall / ATCC 3502 / NCTC 13319 / Type A)</name>
    <dbReference type="NCBI Taxonomy" id="441771"/>
    <lineage>
        <taxon>Bacteria</taxon>
        <taxon>Bacillati</taxon>
        <taxon>Bacillota</taxon>
        <taxon>Clostridia</taxon>
        <taxon>Eubacteriales</taxon>
        <taxon>Clostridiaceae</taxon>
        <taxon>Clostridium</taxon>
    </lineage>
</organism>